<evidence type="ECO:0000250" key="1">
    <source>
        <dbReference type="UniProtKB" id="P23301"/>
    </source>
</evidence>
<evidence type="ECO:0000250" key="2">
    <source>
        <dbReference type="UniProtKB" id="Q9XI91"/>
    </source>
</evidence>
<evidence type="ECO:0000256" key="3">
    <source>
        <dbReference type="SAM" id="MobiDB-lite"/>
    </source>
</evidence>
<evidence type="ECO:0000305" key="4"/>
<protein>
    <recommendedName>
        <fullName>Eukaryotic translation initiation factor 5A-4</fullName>
        <shortName>eIF-5A-4</shortName>
    </recommendedName>
    <alternativeName>
        <fullName>eIF-4D</fullName>
    </alternativeName>
</protein>
<dbReference type="EMBL" id="AB004825">
    <property type="protein sequence ID" value="BAA20878.1"/>
    <property type="molecule type" value="mRNA"/>
</dbReference>
<dbReference type="SMR" id="P56336"/>
<dbReference type="FunCoup" id="P56336">
    <property type="interactions" value="1860"/>
</dbReference>
<dbReference type="STRING" id="4113.P56336"/>
<dbReference type="PaxDb" id="4113-PGSC0003DMT400068977"/>
<dbReference type="EnsemblPlants" id="PGSC0003DMT400068977">
    <property type="protein sequence ID" value="PGSC0003DMT400068977"/>
    <property type="gene ID" value="PGSC0003DMG400026829"/>
</dbReference>
<dbReference type="Gramene" id="PGSC0003DMT400068977">
    <property type="protein sequence ID" value="PGSC0003DMT400068977"/>
    <property type="gene ID" value="PGSC0003DMG400026829"/>
</dbReference>
<dbReference type="eggNOG" id="KOG3271">
    <property type="taxonomic scope" value="Eukaryota"/>
</dbReference>
<dbReference type="HOGENOM" id="CLU_102600_1_0_1"/>
<dbReference type="InParanoid" id="P56336"/>
<dbReference type="OMA" id="AKCHFTA"/>
<dbReference type="OrthoDB" id="9975114at2759"/>
<dbReference type="Proteomes" id="UP000011115">
    <property type="component" value="Unassembled WGS sequence"/>
</dbReference>
<dbReference type="ExpressionAtlas" id="P56336">
    <property type="expression patterns" value="baseline and differential"/>
</dbReference>
<dbReference type="GO" id="GO:0043022">
    <property type="term" value="F:ribosome binding"/>
    <property type="evidence" value="ECO:0007669"/>
    <property type="project" value="InterPro"/>
</dbReference>
<dbReference type="GO" id="GO:0003723">
    <property type="term" value="F:RNA binding"/>
    <property type="evidence" value="ECO:0007669"/>
    <property type="project" value="InterPro"/>
</dbReference>
<dbReference type="GO" id="GO:0003746">
    <property type="term" value="F:translation elongation factor activity"/>
    <property type="evidence" value="ECO:0000318"/>
    <property type="project" value="GO_Central"/>
</dbReference>
<dbReference type="GO" id="GO:0003743">
    <property type="term" value="F:translation initiation factor activity"/>
    <property type="evidence" value="ECO:0007669"/>
    <property type="project" value="UniProtKB-KW"/>
</dbReference>
<dbReference type="GO" id="GO:0045901">
    <property type="term" value="P:positive regulation of translational elongation"/>
    <property type="evidence" value="ECO:0007669"/>
    <property type="project" value="InterPro"/>
</dbReference>
<dbReference type="GO" id="GO:0045905">
    <property type="term" value="P:positive regulation of translational termination"/>
    <property type="evidence" value="ECO:0007669"/>
    <property type="project" value="InterPro"/>
</dbReference>
<dbReference type="GO" id="GO:0006414">
    <property type="term" value="P:translational elongation"/>
    <property type="evidence" value="ECO:0000318"/>
    <property type="project" value="GO_Central"/>
</dbReference>
<dbReference type="CDD" id="cd04468">
    <property type="entry name" value="S1_eIF5A"/>
    <property type="match status" value="1"/>
</dbReference>
<dbReference type="FunFam" id="2.30.30.30:FF:000012">
    <property type="entry name" value="Eukaryotic translation initiation factor 5A"/>
    <property type="match status" value="1"/>
</dbReference>
<dbReference type="FunFam" id="2.40.50.140:FF:000034">
    <property type="entry name" value="Eukaryotic translation initiation factor 5A"/>
    <property type="match status" value="1"/>
</dbReference>
<dbReference type="Gene3D" id="2.30.30.30">
    <property type="match status" value="1"/>
</dbReference>
<dbReference type="Gene3D" id="2.40.50.140">
    <property type="entry name" value="Nucleic acid-binding proteins"/>
    <property type="match status" value="1"/>
</dbReference>
<dbReference type="InterPro" id="IPR001884">
    <property type="entry name" value="IF5A-like"/>
</dbReference>
<dbReference type="InterPro" id="IPR048670">
    <property type="entry name" value="IF5A-like_N"/>
</dbReference>
<dbReference type="InterPro" id="IPR012340">
    <property type="entry name" value="NA-bd_OB-fold"/>
</dbReference>
<dbReference type="InterPro" id="IPR014722">
    <property type="entry name" value="Rib_uL2_dom2"/>
</dbReference>
<dbReference type="InterPro" id="IPR019769">
    <property type="entry name" value="Trans_elong_IF5A_hypusine_site"/>
</dbReference>
<dbReference type="InterPro" id="IPR020189">
    <property type="entry name" value="Transl_elong_IF5A_C"/>
</dbReference>
<dbReference type="InterPro" id="IPR008991">
    <property type="entry name" value="Translation_prot_SH3-like_sf"/>
</dbReference>
<dbReference type="NCBIfam" id="TIGR00037">
    <property type="entry name" value="eIF_5A"/>
    <property type="match status" value="1"/>
</dbReference>
<dbReference type="PANTHER" id="PTHR11673">
    <property type="entry name" value="TRANSLATION INITIATION FACTOR 5A FAMILY MEMBER"/>
    <property type="match status" value="1"/>
</dbReference>
<dbReference type="Pfam" id="PF01287">
    <property type="entry name" value="eIF-5a"/>
    <property type="match status" value="1"/>
</dbReference>
<dbReference type="Pfam" id="PF21485">
    <property type="entry name" value="IF5A-like_N"/>
    <property type="match status" value="1"/>
</dbReference>
<dbReference type="PIRSF" id="PIRSF003025">
    <property type="entry name" value="eIF5A"/>
    <property type="match status" value="1"/>
</dbReference>
<dbReference type="SMART" id="SM01376">
    <property type="entry name" value="eIF-5a"/>
    <property type="match status" value="1"/>
</dbReference>
<dbReference type="SUPFAM" id="SSF50249">
    <property type="entry name" value="Nucleic acid-binding proteins"/>
    <property type="match status" value="1"/>
</dbReference>
<dbReference type="SUPFAM" id="SSF50104">
    <property type="entry name" value="Translation proteins SH3-like domain"/>
    <property type="match status" value="1"/>
</dbReference>
<dbReference type="PROSITE" id="PS00302">
    <property type="entry name" value="IF5A_HYPUSINE"/>
    <property type="match status" value="1"/>
</dbReference>
<accession>P56336</accession>
<feature type="chain" id="PRO_0000142480" description="Eukaryotic translation initiation factor 5A-4">
    <location>
        <begin position="1"/>
        <end position="159"/>
    </location>
</feature>
<feature type="region of interest" description="Disordered" evidence="3">
    <location>
        <begin position="1"/>
        <end position="21"/>
    </location>
</feature>
<feature type="compositionally biased region" description="Basic and acidic residues" evidence="3">
    <location>
        <begin position="1"/>
        <end position="12"/>
    </location>
</feature>
<feature type="modified residue" description="Hypusine" evidence="2">
    <location>
        <position position="52"/>
    </location>
</feature>
<organism>
    <name type="scientific">Solanum tuberosum</name>
    <name type="common">Potato</name>
    <dbReference type="NCBI Taxonomy" id="4113"/>
    <lineage>
        <taxon>Eukaryota</taxon>
        <taxon>Viridiplantae</taxon>
        <taxon>Streptophyta</taxon>
        <taxon>Embryophyta</taxon>
        <taxon>Tracheophyta</taxon>
        <taxon>Spermatophyta</taxon>
        <taxon>Magnoliopsida</taxon>
        <taxon>eudicotyledons</taxon>
        <taxon>Gunneridae</taxon>
        <taxon>Pentapetalae</taxon>
        <taxon>asterids</taxon>
        <taxon>lamiids</taxon>
        <taxon>Solanales</taxon>
        <taxon>Solanaceae</taxon>
        <taxon>Solanoideae</taxon>
        <taxon>Solaneae</taxon>
        <taxon>Solanum</taxon>
    </lineage>
</organism>
<gene>
    <name type="primary">EIF5A4</name>
</gene>
<name>IF5A4_SOLTU</name>
<keyword id="KW-0385">Hypusine</keyword>
<keyword id="KW-0396">Initiation factor</keyword>
<keyword id="KW-0648">Protein biosynthesis</keyword>
<keyword id="KW-1185">Reference proteome</keyword>
<proteinExistence type="evidence at transcript level"/>
<reference key="1">
    <citation type="online journal article" date="1997" name="Plant Gene Register">
        <title>Nucleotide sequence of five cDNAs encoding eukaryotic translation initiation factor 5A (eIF-5A) from potato.</title>
        <authorList>
            <person name="In J.G."/>
            <person name="Fujino K."/>
            <person name="Kikuta Y."/>
        </authorList>
        <locator>PGR97-147</locator>
    </citation>
    <scope>NUCLEOTIDE SEQUENCE [MRNA]</scope>
    <source>
        <strain>cv. Irish Cobbler</strain>
    </source>
</reference>
<reference key="2">
    <citation type="journal article" date="2011" name="Nature">
        <title>Genome sequence and analysis of the tuber crop potato.</title>
        <authorList>
            <consortium name="The Potato Genome Sequencing Consortium"/>
        </authorList>
    </citation>
    <scope>NUCLEOTIDE SEQUENCE [LARGE SCALE GENOMIC DNA]</scope>
    <source>
        <strain>cv. DM1-3 516 R44</strain>
    </source>
</reference>
<comment type="function">
    <text evidence="1">Translation factor that promotes translation elongation and termination, particularly upon ribosome stalling at specific amino acid sequence contexts (By similarity). Binds between the exit (E) and peptidyl (P) site of the ribosome and promotes rescue of stalled ribosome: specifically required for efficient translation of polyproline-containing peptides as well as other motifs that stall the ribosome (By similarity). Acts as a ribosome quality control (RQC) cofactor by joining the RQC complex to facilitate peptidyl transfer during CAT tailing step (By similarity).</text>
</comment>
<comment type="PTM">
    <text evidence="2">Lys-52 undergoes hypusination, a unique post-translational modification that consists in the addition of a butylamino group from spermidine to lysine side chain, leading to the formation of the unusual amino acid hypusine. eIF-5As are the only known proteins to undergo this modification, which is essential for their function.</text>
</comment>
<comment type="similarity">
    <text evidence="4">Belongs to the eIF-5A family.</text>
</comment>
<sequence>MSDEEHQFESKADAGASKTYPQQAGTIRKSGYIVIKGRPCKVVEVSTSKTGKHGHAKCHFVAIDIFTGKKLEDIVPSSHNCDVPHVNRTDYQLIDISEDGFVSLLTDNGNTKDDLRLPTDDSLLSQIKDGFAEGKDLVVSVMSAMGEEQINALKDIGPK</sequence>